<proteinExistence type="evidence at protein level"/>
<dbReference type="EMBL" id="BX248076">
    <property type="protein sequence ID" value="CAD62365.1"/>
    <property type="status" value="ALT_INIT"/>
    <property type="molecule type" value="mRNA"/>
</dbReference>
<dbReference type="EMBL" id="AL138539">
    <property type="status" value="NOT_ANNOTATED_CDS"/>
    <property type="molecule type" value="Genomic_DNA"/>
</dbReference>
<dbReference type="EMBL" id="BC146604">
    <property type="protein sequence ID" value="AAI46605.1"/>
    <property type="molecule type" value="mRNA"/>
</dbReference>
<dbReference type="EMBL" id="AK098471">
    <property type="protein sequence ID" value="BAC05312.1"/>
    <property type="status" value="ALT_INIT"/>
    <property type="molecule type" value="mRNA"/>
</dbReference>
<dbReference type="EMBL" id="AK131436">
    <property type="protein sequence ID" value="BAD18582.1"/>
    <property type="status" value="ALT_INIT"/>
    <property type="molecule type" value="mRNA"/>
</dbReference>
<dbReference type="CCDS" id="CCDS86430.1">
    <molecule id="Q6ZMZ3-2"/>
</dbReference>
<dbReference type="CCDS" id="CCDS91927.1">
    <molecule id="Q6ZMZ3-3"/>
</dbReference>
<dbReference type="CCDS" id="CCDS9935.1">
    <molecule id="Q6ZMZ3-1"/>
</dbReference>
<dbReference type="RefSeq" id="NP_001350621.1">
    <molecule id="Q6ZMZ3-2"/>
    <property type="nucleotide sequence ID" value="NM_001363692.2"/>
</dbReference>
<dbReference type="RefSeq" id="NP_001371210.1">
    <molecule id="Q6ZMZ3-3"/>
    <property type="nucleotide sequence ID" value="NM_001384281.1"/>
</dbReference>
<dbReference type="RefSeq" id="NP_001371211.1">
    <molecule id="Q6ZMZ3-3"/>
    <property type="nucleotide sequence ID" value="NM_001384282.1"/>
</dbReference>
<dbReference type="RefSeq" id="NP_689805.3">
    <molecule id="Q6ZMZ3-1"/>
    <property type="nucleotide sequence ID" value="NM_152592.4"/>
</dbReference>
<dbReference type="RefSeq" id="XP_005267434.1">
    <property type="nucleotide sequence ID" value="XM_005267377.3"/>
</dbReference>
<dbReference type="RefSeq" id="XP_006720126.1">
    <property type="nucleotide sequence ID" value="XM_006720063.3"/>
</dbReference>
<dbReference type="RefSeq" id="XP_016876545.1">
    <property type="nucleotide sequence ID" value="XM_017021056.1"/>
</dbReference>
<dbReference type="PDB" id="6WME">
    <property type="method" value="X-ray"/>
    <property type="resolution" value="1.53 A"/>
    <property type="chains" value="B=948-975"/>
</dbReference>
<dbReference type="PDBsum" id="6WME"/>
<dbReference type="SMR" id="Q6ZMZ3"/>
<dbReference type="BioGRID" id="127775">
    <property type="interactions" value="441"/>
</dbReference>
<dbReference type="ComplexPortal" id="CPX-7671">
    <property type="entry name" value="LINC complex, SUN2-SYNE3 variant"/>
</dbReference>
<dbReference type="ComplexPortal" id="CPX-7673">
    <property type="entry name" value="LINC complex, SUN1-SYNE3 variant"/>
</dbReference>
<dbReference type="FunCoup" id="Q6ZMZ3">
    <property type="interactions" value="183"/>
</dbReference>
<dbReference type="IntAct" id="Q6ZMZ3">
    <property type="interactions" value="7"/>
</dbReference>
<dbReference type="STRING" id="9606.ENSP00000334308"/>
<dbReference type="CarbonylDB" id="Q6ZMZ3"/>
<dbReference type="GlyGen" id="Q6ZMZ3">
    <property type="glycosylation" value="2 sites, 2 O-linked glycans (2 sites)"/>
</dbReference>
<dbReference type="iPTMnet" id="Q6ZMZ3"/>
<dbReference type="PhosphoSitePlus" id="Q6ZMZ3"/>
<dbReference type="SwissPalm" id="Q6ZMZ3"/>
<dbReference type="BioMuta" id="SYNE3"/>
<dbReference type="DMDM" id="134035037"/>
<dbReference type="jPOST" id="Q6ZMZ3"/>
<dbReference type="MassIVE" id="Q6ZMZ3"/>
<dbReference type="PaxDb" id="9606-ENSP00000334308"/>
<dbReference type="PeptideAtlas" id="Q6ZMZ3"/>
<dbReference type="ProteomicsDB" id="67943">
    <molecule id="Q6ZMZ3-1"/>
</dbReference>
<dbReference type="ProteomicsDB" id="67944">
    <molecule id="Q6ZMZ3-2"/>
</dbReference>
<dbReference type="ProteomicsDB" id="67945">
    <molecule id="Q6ZMZ3-3"/>
</dbReference>
<dbReference type="Pumba" id="Q6ZMZ3"/>
<dbReference type="Antibodypedia" id="54248">
    <property type="antibodies" value="163 antibodies from 30 providers"/>
</dbReference>
<dbReference type="DNASU" id="161176"/>
<dbReference type="Ensembl" id="ENST00000334258.9">
    <molecule id="Q6ZMZ3-1"/>
    <property type="protein sequence ID" value="ENSP00000334308.4"/>
    <property type="gene ID" value="ENSG00000176438.13"/>
</dbReference>
<dbReference type="Ensembl" id="ENST00000553340.1">
    <molecule id="Q6ZMZ3-3"/>
    <property type="protein sequence ID" value="ENSP00000450774.1"/>
    <property type="gene ID" value="ENSG00000176438.13"/>
</dbReference>
<dbReference type="Ensembl" id="ENST00000557275.5">
    <molecule id="Q6ZMZ3-2"/>
    <property type="protein sequence ID" value="ENSP00000450562.1"/>
    <property type="gene ID" value="ENSG00000176438.13"/>
</dbReference>
<dbReference type="Ensembl" id="ENST00000682763.1">
    <molecule id="Q6ZMZ3-1"/>
    <property type="protein sequence ID" value="ENSP00000507501.1"/>
    <property type="gene ID" value="ENSG00000176438.13"/>
</dbReference>
<dbReference type="GeneID" id="161176"/>
<dbReference type="KEGG" id="hsa:161176"/>
<dbReference type="MANE-Select" id="ENST00000682763.1">
    <property type="protein sequence ID" value="ENSP00000507501.1"/>
    <property type="RefSeq nucleotide sequence ID" value="NM_152592.6"/>
    <property type="RefSeq protein sequence ID" value="NP_689805.3"/>
</dbReference>
<dbReference type="UCSC" id="uc001yei.4">
    <molecule id="Q6ZMZ3-1"/>
    <property type="organism name" value="human"/>
</dbReference>
<dbReference type="AGR" id="HGNC:19861"/>
<dbReference type="CTD" id="161176"/>
<dbReference type="DisGeNET" id="161176"/>
<dbReference type="GeneCards" id="SYNE3"/>
<dbReference type="HGNC" id="HGNC:19861">
    <property type="gene designation" value="SYNE3"/>
</dbReference>
<dbReference type="HPA" id="ENSG00000176438">
    <property type="expression patterns" value="Tissue enhanced (adipose)"/>
</dbReference>
<dbReference type="MIM" id="610861">
    <property type="type" value="gene"/>
</dbReference>
<dbReference type="neXtProt" id="NX_Q6ZMZ3"/>
<dbReference type="OpenTargets" id="ENSG00000176438"/>
<dbReference type="PharmGKB" id="PA134931380"/>
<dbReference type="VEuPathDB" id="HostDB:ENSG00000176438"/>
<dbReference type="eggNOG" id="ENOG502QQSI">
    <property type="taxonomic scope" value="Eukaryota"/>
</dbReference>
<dbReference type="GeneTree" id="ENSGT00440000039367"/>
<dbReference type="HOGENOM" id="CLU_012764_0_0_1"/>
<dbReference type="InParanoid" id="Q6ZMZ3"/>
<dbReference type="OMA" id="ACCLEDQ"/>
<dbReference type="OrthoDB" id="9838382at2759"/>
<dbReference type="PAN-GO" id="Q6ZMZ3">
    <property type="GO annotations" value="5 GO annotations based on evolutionary models"/>
</dbReference>
<dbReference type="PhylomeDB" id="Q6ZMZ3"/>
<dbReference type="TreeFam" id="TF331132"/>
<dbReference type="PathwayCommons" id="Q6ZMZ3"/>
<dbReference type="SignaLink" id="Q6ZMZ3"/>
<dbReference type="SIGNOR" id="Q6ZMZ3"/>
<dbReference type="BioGRID-ORCS" id="161176">
    <property type="hits" value="5 hits in 1143 CRISPR screens"/>
</dbReference>
<dbReference type="ChiTaRS" id="SYNE3">
    <property type="organism name" value="human"/>
</dbReference>
<dbReference type="GenomeRNAi" id="161176"/>
<dbReference type="Pharos" id="Q6ZMZ3">
    <property type="development level" value="Tbio"/>
</dbReference>
<dbReference type="PRO" id="PR:Q6ZMZ3"/>
<dbReference type="Proteomes" id="UP000005640">
    <property type="component" value="Chromosome 14"/>
</dbReference>
<dbReference type="RNAct" id="Q6ZMZ3">
    <property type="molecule type" value="protein"/>
</dbReference>
<dbReference type="Bgee" id="ENSG00000176438">
    <property type="expression patterns" value="Expressed in tendon of biceps brachii and 192 other cell types or tissues"/>
</dbReference>
<dbReference type="ExpressionAtlas" id="Q6ZMZ3">
    <property type="expression patterns" value="baseline and differential"/>
</dbReference>
<dbReference type="GO" id="GO:0005737">
    <property type="term" value="C:cytoplasm"/>
    <property type="evidence" value="ECO:0000318"/>
    <property type="project" value="GO_Central"/>
</dbReference>
<dbReference type="GO" id="GO:0034993">
    <property type="term" value="C:meiotic nuclear membrane microtubule tethering complex"/>
    <property type="evidence" value="ECO:0000314"/>
    <property type="project" value="UniProtKB"/>
</dbReference>
<dbReference type="GO" id="GO:0016020">
    <property type="term" value="C:membrane"/>
    <property type="evidence" value="ECO:0007005"/>
    <property type="project" value="UniProtKB"/>
</dbReference>
<dbReference type="GO" id="GO:0005635">
    <property type="term" value="C:nuclear envelope"/>
    <property type="evidence" value="ECO:0000314"/>
    <property type="project" value="UniProtKB"/>
</dbReference>
<dbReference type="GO" id="GO:0031965">
    <property type="term" value="C:nuclear membrane"/>
    <property type="evidence" value="ECO:0000314"/>
    <property type="project" value="HPA"/>
</dbReference>
<dbReference type="GO" id="GO:0005640">
    <property type="term" value="C:nuclear outer membrane"/>
    <property type="evidence" value="ECO:0000318"/>
    <property type="project" value="GO_Central"/>
</dbReference>
<dbReference type="GO" id="GO:0005791">
    <property type="term" value="C:rough endoplasmic reticulum"/>
    <property type="evidence" value="ECO:0007669"/>
    <property type="project" value="UniProtKB-SubCell"/>
</dbReference>
<dbReference type="GO" id="GO:0051015">
    <property type="term" value="F:actin filament binding"/>
    <property type="evidence" value="ECO:0000315"/>
    <property type="project" value="UniProtKB"/>
</dbReference>
<dbReference type="GO" id="GO:0140444">
    <property type="term" value="F:cytoskeleton-nuclear membrane anchor activity"/>
    <property type="evidence" value="ECO:0000314"/>
    <property type="project" value="GO_Central"/>
</dbReference>
<dbReference type="GO" id="GO:0007010">
    <property type="term" value="P:cytoskeleton organization"/>
    <property type="evidence" value="ECO:0000315"/>
    <property type="project" value="UniProtKB"/>
</dbReference>
<dbReference type="GO" id="GO:0090150">
    <property type="term" value="P:establishment of protein localization to membrane"/>
    <property type="evidence" value="ECO:0000314"/>
    <property type="project" value="UniProtKB"/>
</dbReference>
<dbReference type="GO" id="GO:0008360">
    <property type="term" value="P:regulation of cell shape"/>
    <property type="evidence" value="ECO:0000315"/>
    <property type="project" value="UniProtKB"/>
</dbReference>
<dbReference type="FunFam" id="1.20.58.60:FF:000237">
    <property type="entry name" value="Spectrin repeat containing nuclear envelope family member 3"/>
    <property type="match status" value="1"/>
</dbReference>
<dbReference type="FunFam" id="1.20.58.60:FF:000247">
    <property type="entry name" value="Spectrin repeat-containing, nuclear envelope family member 3"/>
    <property type="match status" value="1"/>
</dbReference>
<dbReference type="FunFam" id="1.20.58.60:FF:000364">
    <property type="entry name" value="Spectrin repeat-containing, nuclear envelope family member 3"/>
    <property type="match status" value="1"/>
</dbReference>
<dbReference type="Gene3D" id="1.20.58.60">
    <property type="match status" value="3"/>
</dbReference>
<dbReference type="InterPro" id="IPR012315">
    <property type="entry name" value="KASH"/>
</dbReference>
<dbReference type="InterPro" id="IPR052403">
    <property type="entry name" value="LINC-complex_assoc"/>
</dbReference>
<dbReference type="InterPro" id="IPR018159">
    <property type="entry name" value="Spectrin/alpha-actinin"/>
</dbReference>
<dbReference type="InterPro" id="IPR002017">
    <property type="entry name" value="Spectrin_repeat"/>
</dbReference>
<dbReference type="PANTHER" id="PTHR47535">
    <property type="entry name" value="MUSCLE-SPECIFIC PROTEIN 300 KDA, ISOFORM G"/>
    <property type="match status" value="1"/>
</dbReference>
<dbReference type="PANTHER" id="PTHR47535:SF1">
    <property type="entry name" value="NESPRIN-1"/>
    <property type="match status" value="1"/>
</dbReference>
<dbReference type="Pfam" id="PF10541">
    <property type="entry name" value="KASH"/>
    <property type="match status" value="1"/>
</dbReference>
<dbReference type="Pfam" id="PF00435">
    <property type="entry name" value="Spectrin"/>
    <property type="match status" value="1"/>
</dbReference>
<dbReference type="SMART" id="SM01249">
    <property type="entry name" value="KASH"/>
    <property type="match status" value="1"/>
</dbReference>
<dbReference type="SMART" id="SM00150">
    <property type="entry name" value="SPEC"/>
    <property type="match status" value="3"/>
</dbReference>
<dbReference type="SUPFAM" id="SSF46966">
    <property type="entry name" value="Spectrin repeat"/>
    <property type="match status" value="5"/>
</dbReference>
<dbReference type="PROSITE" id="PS51049">
    <property type="entry name" value="KASH"/>
    <property type="match status" value="1"/>
</dbReference>
<gene>
    <name evidence="15" type="primary">SYNE3</name>
    <name evidence="15" type="synonym">C14orf139</name>
    <name evidence="15" type="synonym">C14orf49</name>
    <name evidence="15" type="synonym">LINC00341</name>
</gene>
<reference key="1">
    <citation type="submission" date="2003-02" db="EMBL/GenBank/DDBJ databases">
        <title>Full-length cDNA libraries and normalization.</title>
        <authorList>
            <person name="Li W.B."/>
            <person name="Gruber C."/>
            <person name="Jessee J."/>
            <person name="Polayes D."/>
        </authorList>
    </citation>
    <scope>NUCLEOTIDE SEQUENCE [LARGE SCALE MRNA] (ISOFORM 3)</scope>
    <source>
        <tissue>B-cell</tissue>
    </source>
</reference>
<reference key="2">
    <citation type="journal article" date="2003" name="Nature">
        <title>The DNA sequence and analysis of human chromosome 14.</title>
        <authorList>
            <person name="Heilig R."/>
            <person name="Eckenberg R."/>
            <person name="Petit J.-L."/>
            <person name="Fonknechten N."/>
            <person name="Da Silva C."/>
            <person name="Cattolico L."/>
            <person name="Levy M."/>
            <person name="Barbe V."/>
            <person name="De Berardinis V."/>
            <person name="Ureta-Vidal A."/>
            <person name="Pelletier E."/>
            <person name="Vico V."/>
            <person name="Anthouard V."/>
            <person name="Rowen L."/>
            <person name="Madan A."/>
            <person name="Qin S."/>
            <person name="Sun H."/>
            <person name="Du H."/>
            <person name="Pepin K."/>
            <person name="Artiguenave F."/>
            <person name="Robert C."/>
            <person name="Cruaud C."/>
            <person name="Bruels T."/>
            <person name="Jaillon O."/>
            <person name="Friedlander L."/>
            <person name="Samson G."/>
            <person name="Brottier P."/>
            <person name="Cure S."/>
            <person name="Segurens B."/>
            <person name="Aniere F."/>
            <person name="Samain S."/>
            <person name="Crespeau H."/>
            <person name="Abbasi N."/>
            <person name="Aiach N."/>
            <person name="Boscus D."/>
            <person name="Dickhoff R."/>
            <person name="Dors M."/>
            <person name="Dubois I."/>
            <person name="Friedman C."/>
            <person name="Gouyvenoux M."/>
            <person name="James R."/>
            <person name="Madan A."/>
            <person name="Mairey-Estrada B."/>
            <person name="Mangenot S."/>
            <person name="Martins N."/>
            <person name="Menard M."/>
            <person name="Oztas S."/>
            <person name="Ratcliffe A."/>
            <person name="Shaffer T."/>
            <person name="Trask B."/>
            <person name="Vacherie B."/>
            <person name="Bellemere C."/>
            <person name="Belser C."/>
            <person name="Besnard-Gonnet M."/>
            <person name="Bartol-Mavel D."/>
            <person name="Boutard M."/>
            <person name="Briez-Silla S."/>
            <person name="Combette S."/>
            <person name="Dufosse-Laurent V."/>
            <person name="Ferron C."/>
            <person name="Lechaplais C."/>
            <person name="Louesse C."/>
            <person name="Muselet D."/>
            <person name="Magdelenat G."/>
            <person name="Pateau E."/>
            <person name="Petit E."/>
            <person name="Sirvain-Trukniewicz P."/>
            <person name="Trybou A."/>
            <person name="Vega-Czarny N."/>
            <person name="Bataille E."/>
            <person name="Bluet E."/>
            <person name="Bordelais I."/>
            <person name="Dubois M."/>
            <person name="Dumont C."/>
            <person name="Guerin T."/>
            <person name="Haffray S."/>
            <person name="Hammadi R."/>
            <person name="Muanga J."/>
            <person name="Pellouin V."/>
            <person name="Robert D."/>
            <person name="Wunderle E."/>
            <person name="Gauguet G."/>
            <person name="Roy A."/>
            <person name="Sainte-Marthe L."/>
            <person name="Verdier J."/>
            <person name="Verdier-Discala C."/>
            <person name="Hillier L.W."/>
            <person name="Fulton L."/>
            <person name="McPherson J."/>
            <person name="Matsuda F."/>
            <person name="Wilson R."/>
            <person name="Scarpelli C."/>
            <person name="Gyapay G."/>
            <person name="Wincker P."/>
            <person name="Saurin W."/>
            <person name="Quetier F."/>
            <person name="Waterston R."/>
            <person name="Hood L."/>
            <person name="Weissenbach J."/>
        </authorList>
    </citation>
    <scope>NUCLEOTIDE SEQUENCE [LARGE SCALE GENOMIC DNA]</scope>
</reference>
<reference key="3">
    <citation type="journal article" date="2004" name="Genome Res.">
        <title>The status, quality, and expansion of the NIH full-length cDNA project: the Mammalian Gene Collection (MGC).</title>
        <authorList>
            <consortium name="The MGC Project Team"/>
        </authorList>
    </citation>
    <scope>NUCLEOTIDE SEQUENCE [LARGE SCALE MRNA] (ISOFORM 1)</scope>
    <scope>VARIANTS MET-668 AND LEU-795 DEL</scope>
</reference>
<reference key="4">
    <citation type="journal article" date="2004" name="Nat. Genet.">
        <title>Complete sequencing and characterization of 21,243 full-length human cDNAs.</title>
        <authorList>
            <person name="Ota T."/>
            <person name="Suzuki Y."/>
            <person name="Nishikawa T."/>
            <person name="Otsuki T."/>
            <person name="Sugiyama T."/>
            <person name="Irie R."/>
            <person name="Wakamatsu A."/>
            <person name="Hayashi K."/>
            <person name="Sato H."/>
            <person name="Nagai K."/>
            <person name="Kimura K."/>
            <person name="Makita H."/>
            <person name="Sekine M."/>
            <person name="Obayashi M."/>
            <person name="Nishi T."/>
            <person name="Shibahara T."/>
            <person name="Tanaka T."/>
            <person name="Ishii S."/>
            <person name="Yamamoto J."/>
            <person name="Saito K."/>
            <person name="Kawai Y."/>
            <person name="Isono Y."/>
            <person name="Nakamura Y."/>
            <person name="Nagahari K."/>
            <person name="Murakami K."/>
            <person name="Yasuda T."/>
            <person name="Iwayanagi T."/>
            <person name="Wagatsuma M."/>
            <person name="Shiratori A."/>
            <person name="Sudo H."/>
            <person name="Hosoiri T."/>
            <person name="Kaku Y."/>
            <person name="Kodaira H."/>
            <person name="Kondo H."/>
            <person name="Sugawara M."/>
            <person name="Takahashi M."/>
            <person name="Kanda K."/>
            <person name="Yokoi T."/>
            <person name="Furuya T."/>
            <person name="Kikkawa E."/>
            <person name="Omura Y."/>
            <person name="Abe K."/>
            <person name="Kamihara K."/>
            <person name="Katsuta N."/>
            <person name="Sato K."/>
            <person name="Tanikawa M."/>
            <person name="Yamazaki M."/>
            <person name="Ninomiya K."/>
            <person name="Ishibashi T."/>
            <person name="Yamashita H."/>
            <person name="Murakawa K."/>
            <person name="Fujimori K."/>
            <person name="Tanai H."/>
            <person name="Kimata M."/>
            <person name="Watanabe M."/>
            <person name="Hiraoka S."/>
            <person name="Chiba Y."/>
            <person name="Ishida S."/>
            <person name="Ono Y."/>
            <person name="Takiguchi S."/>
            <person name="Watanabe S."/>
            <person name="Yosida M."/>
            <person name="Hotuta T."/>
            <person name="Kusano J."/>
            <person name="Kanehori K."/>
            <person name="Takahashi-Fujii A."/>
            <person name="Hara H."/>
            <person name="Tanase T.-O."/>
            <person name="Nomura Y."/>
            <person name="Togiya S."/>
            <person name="Komai F."/>
            <person name="Hara R."/>
            <person name="Takeuchi K."/>
            <person name="Arita M."/>
            <person name="Imose N."/>
            <person name="Musashino K."/>
            <person name="Yuuki H."/>
            <person name="Oshima A."/>
            <person name="Sasaki N."/>
            <person name="Aotsuka S."/>
            <person name="Yoshikawa Y."/>
            <person name="Matsunawa H."/>
            <person name="Ichihara T."/>
            <person name="Shiohata N."/>
            <person name="Sano S."/>
            <person name="Moriya S."/>
            <person name="Momiyama H."/>
            <person name="Satoh N."/>
            <person name="Takami S."/>
            <person name="Terashima Y."/>
            <person name="Suzuki O."/>
            <person name="Nakagawa S."/>
            <person name="Senoh A."/>
            <person name="Mizoguchi H."/>
            <person name="Goto Y."/>
            <person name="Shimizu F."/>
            <person name="Wakebe H."/>
            <person name="Hishigaki H."/>
            <person name="Watanabe T."/>
            <person name="Sugiyama A."/>
            <person name="Takemoto M."/>
            <person name="Kawakami B."/>
            <person name="Yamazaki M."/>
            <person name="Watanabe K."/>
            <person name="Kumagai A."/>
            <person name="Itakura S."/>
            <person name="Fukuzumi Y."/>
            <person name="Fujimori Y."/>
            <person name="Komiyama M."/>
            <person name="Tashiro H."/>
            <person name="Tanigami A."/>
            <person name="Fujiwara T."/>
            <person name="Ono T."/>
            <person name="Yamada K."/>
            <person name="Fujii Y."/>
            <person name="Ozaki K."/>
            <person name="Hirao M."/>
            <person name="Ohmori Y."/>
            <person name="Kawabata A."/>
            <person name="Hikiji T."/>
            <person name="Kobatake N."/>
            <person name="Inagaki H."/>
            <person name="Ikema Y."/>
            <person name="Okamoto S."/>
            <person name="Okitani R."/>
            <person name="Kawakami T."/>
            <person name="Noguchi S."/>
            <person name="Itoh T."/>
            <person name="Shigeta K."/>
            <person name="Senba T."/>
            <person name="Matsumura K."/>
            <person name="Nakajima Y."/>
            <person name="Mizuno T."/>
            <person name="Morinaga M."/>
            <person name="Sasaki M."/>
            <person name="Togashi T."/>
            <person name="Oyama M."/>
            <person name="Hata H."/>
            <person name="Watanabe M."/>
            <person name="Komatsu T."/>
            <person name="Mizushima-Sugano J."/>
            <person name="Satoh T."/>
            <person name="Shirai Y."/>
            <person name="Takahashi Y."/>
            <person name="Nakagawa K."/>
            <person name="Okumura K."/>
            <person name="Nagase T."/>
            <person name="Nomura N."/>
            <person name="Kikuchi H."/>
            <person name="Masuho Y."/>
            <person name="Yamashita R."/>
            <person name="Nakai K."/>
            <person name="Yada T."/>
            <person name="Nakamura Y."/>
            <person name="Ohara O."/>
            <person name="Isogai T."/>
            <person name="Sugano S."/>
        </authorList>
    </citation>
    <scope>NUCLEOTIDE SEQUENCE [LARGE SCALE MRNA] OF 41-975 (ISOFORM 2)</scope>
    <scope>NUCLEOTIDE SEQUENCE [LARGE SCALE MRNA] OF 411-975 (ISOFORM 1)</scope>
    <scope>VARIANTS MET-668 AND VAL-923</scope>
    <source>
        <tissue>Synovial cell</tissue>
        <tissue>Thyroid</tissue>
    </source>
</reference>
<reference key="5">
    <citation type="journal article" date="2005" name="J. Cell Biol.">
        <title>Nesprin-3, a novel outer nuclear membrane protein, associates with the cytoskeletal linker protein plectin.</title>
        <authorList>
            <person name="Wilhelmsen K."/>
            <person name="Litjens S.H.M."/>
            <person name="Kuikman I."/>
            <person name="Tshimbalanga N."/>
            <person name="Janssen H."/>
            <person name="van den Bout I."/>
            <person name="Raymond K."/>
            <person name="Sonnenberg A."/>
        </authorList>
    </citation>
    <scope>FUNCTION</scope>
</reference>
<reference key="6">
    <citation type="journal article" date="2008" name="Exp. Cell Res.">
        <title>Structural requirements for the assembly of LINC complexes and their function in cellular mechanical stiffness.</title>
        <authorList>
            <person name="Stewart-Hutchinson P.J."/>
            <person name="Hale C.M."/>
            <person name="Wirtz D."/>
            <person name="Hodzic D."/>
        </authorList>
    </citation>
    <scope>FUNCTION</scope>
    <scope>DOMAIN</scope>
    <scope>INTERACTION WITH SUN1 AND SUN2</scope>
</reference>
<reference key="7">
    <citation type="journal article" date="2008" name="J. Cell Sci.">
        <title>TorsinA binds the KASH domain of nesprins and participates in linkage between nuclear envelope and cytoskeleton.</title>
        <authorList>
            <person name="Nery F.C."/>
            <person name="Zeng J."/>
            <person name="Niland B.P."/>
            <person name="Hewett J."/>
            <person name="Farley J."/>
            <person name="Irimia D."/>
            <person name="Li Y."/>
            <person name="Wiche G."/>
            <person name="Sonnenberg A."/>
            <person name="Breakefield X.O."/>
        </authorList>
    </citation>
    <scope>INTERACTION WITH TOR1A</scope>
</reference>
<reference key="8">
    <citation type="journal article" date="2010" name="Sci. Signal.">
        <title>Quantitative phosphoproteomics reveals widespread full phosphorylation site occupancy during mitosis.</title>
        <authorList>
            <person name="Olsen J.V."/>
            <person name="Vermeulen M."/>
            <person name="Santamaria A."/>
            <person name="Kumar C."/>
            <person name="Miller M.L."/>
            <person name="Jensen L.J."/>
            <person name="Gnad F."/>
            <person name="Cox J."/>
            <person name="Jensen T.S."/>
            <person name="Nigg E.A."/>
            <person name="Brunak S."/>
            <person name="Mann M."/>
        </authorList>
    </citation>
    <scope>IDENTIFICATION BY MASS SPECTROMETRY [LARGE SCALE ANALYSIS]</scope>
    <source>
        <tissue>Cervix carcinoma</tissue>
    </source>
</reference>
<reference key="9">
    <citation type="journal article" date="2011" name="Mol. Biol. Cell">
        <title>Nesprin-3 regulates endothelial cell morphology, perinuclear cytoskeletal architecture, and flow-induced polarization.</title>
        <authorList>
            <person name="Morgan J.T."/>
            <person name="Pfeiffer E.R."/>
            <person name="Thirkill T.L."/>
            <person name="Kumar P."/>
            <person name="Peng G."/>
            <person name="Fridolfsson H.N."/>
            <person name="Douglas G.C."/>
            <person name="Starr D.A."/>
            <person name="Barakat A.I."/>
        </authorList>
    </citation>
    <scope>FUNCTION</scope>
    <scope>SUBCELLULAR LOCATION</scope>
    <scope>TISSUE SPECIFICITY</scope>
</reference>
<reference key="10">
    <citation type="journal article" date="2012" name="Int. J. Cell Biol.">
        <title>Cytoskeletal interactions at the nuclear envelope mediated by nesprins.</title>
        <authorList>
            <person name="Taranum S."/>
            <person name="Sur I."/>
            <person name="Muller R."/>
            <person name="Lu W."/>
            <person name="Rashmi R.N."/>
            <person name="Munck M."/>
            <person name="Neumann S."/>
            <person name="Karakesisoglou I."/>
            <person name="Noegel A.A."/>
        </authorList>
    </citation>
    <scope>INTERACTION WITH SYNE1</scope>
</reference>
<feature type="chain" id="PRO_0000281120" description="Nesprin-3">
    <location>
        <begin position="1"/>
        <end position="975"/>
    </location>
</feature>
<feature type="topological domain" description="Cytoplasmic" evidence="4">
    <location>
        <begin position="1"/>
        <end position="925"/>
    </location>
</feature>
<feature type="transmembrane region" description="Helical; Anchor for type IV membrane protein" evidence="4">
    <location>
        <begin position="926"/>
        <end position="946"/>
    </location>
</feature>
<feature type="topological domain" description="Perinuclear space" evidence="4">
    <location>
        <begin position="947"/>
        <end position="975"/>
    </location>
</feature>
<feature type="repeat" description="Spectrin 1">
    <location>
        <begin position="220"/>
        <end position="325"/>
    </location>
</feature>
<feature type="repeat" description="Spectrin 2">
    <location>
        <begin position="647"/>
        <end position="740"/>
    </location>
</feature>
<feature type="domain" description="KASH" evidence="4">
    <location>
        <begin position="917"/>
        <end position="975"/>
    </location>
</feature>
<feature type="coiled-coil region" evidence="3">
    <location>
        <begin position="617"/>
        <end position="645"/>
    </location>
</feature>
<feature type="disulfide bond" description="Interchain (C-563 in SUN2); alternate" evidence="2">
    <location>
        <position position="953"/>
    </location>
</feature>
<feature type="disulfide bond" description="Interchain (with C-657 in SUN1); alternate" evidence="2">
    <location>
        <position position="953"/>
    </location>
</feature>
<feature type="splice variant" id="VSP_023976" description="In isoform 3." evidence="13">
    <original>GLQE</original>
    <variation>VRGL</variation>
    <location>
        <begin position="593"/>
        <end position="596"/>
    </location>
</feature>
<feature type="splice variant" id="VSP_023977" description="In isoform 3." evidence="13">
    <location>
        <begin position="597"/>
        <end position="975"/>
    </location>
</feature>
<feature type="splice variant" id="VSP_023978" description="In isoform 2." evidence="12">
    <location>
        <begin position="793"/>
        <end position="797"/>
    </location>
</feature>
<feature type="sequence variant" id="VAR_031231" description="In dbSNP:rs9671369." evidence="5 6">
    <original>T</original>
    <variation>M</variation>
    <location>
        <position position="668"/>
    </location>
</feature>
<feature type="sequence variant" id="VAR_068433" description="In dbSNP:rs76499929." evidence="6">
    <location>
        <position position="795"/>
    </location>
</feature>
<feature type="sequence variant" id="VAR_031232" description="In dbSNP:rs17092216.">
    <original>R</original>
    <variation>H</variation>
    <location>
        <position position="864"/>
    </location>
</feature>
<feature type="sequence variant" id="VAR_031233" description="In dbSNP:rs12434757." evidence="5">
    <original>A</original>
    <variation>V</variation>
    <location>
        <position position="923"/>
    </location>
</feature>
<feature type="sequence variant" id="VAR_031234" description="In dbSNP:rs10130647.">
    <original>I</original>
    <variation>V</variation>
    <location>
        <position position="946"/>
    </location>
</feature>
<feature type="strand" evidence="16">
    <location>
        <begin position="966"/>
        <end position="971"/>
    </location>
</feature>
<keyword id="KW-0002">3D-structure</keyword>
<keyword id="KW-0025">Alternative splicing</keyword>
<keyword id="KW-0175">Coiled coil</keyword>
<keyword id="KW-1015">Disulfide bond</keyword>
<keyword id="KW-0256">Endoplasmic reticulum</keyword>
<keyword id="KW-0472">Membrane</keyword>
<keyword id="KW-0539">Nucleus</keyword>
<keyword id="KW-1267">Proteomics identification</keyword>
<keyword id="KW-1185">Reference proteome</keyword>
<keyword id="KW-0677">Repeat</keyword>
<keyword id="KW-0812">Transmembrane</keyword>
<keyword id="KW-1133">Transmembrane helix</keyword>
<name>SYNE3_HUMAN</name>
<accession>Q6ZMZ3</accession>
<accession>A6H8H3</accession>
<accession>Q86SX5</accession>
<accession>Q8N7G8</accession>
<evidence type="ECO:0000250" key="1"/>
<evidence type="ECO:0000250" key="2">
    <source>
        <dbReference type="UniProtKB" id="Q8WXH0"/>
    </source>
</evidence>
<evidence type="ECO:0000255" key="3"/>
<evidence type="ECO:0000255" key="4">
    <source>
        <dbReference type="PROSITE-ProRule" id="PRU00385"/>
    </source>
</evidence>
<evidence type="ECO:0000269" key="5">
    <source>
    </source>
</evidence>
<evidence type="ECO:0000269" key="6">
    <source>
    </source>
</evidence>
<evidence type="ECO:0000269" key="7">
    <source>
    </source>
</evidence>
<evidence type="ECO:0000269" key="8">
    <source>
    </source>
</evidence>
<evidence type="ECO:0000269" key="9">
    <source>
    </source>
</evidence>
<evidence type="ECO:0000269" key="10">
    <source>
    </source>
</evidence>
<evidence type="ECO:0000269" key="11">
    <source>
    </source>
</evidence>
<evidence type="ECO:0000303" key="12">
    <source>
    </source>
</evidence>
<evidence type="ECO:0000303" key="13">
    <source ref="1"/>
</evidence>
<evidence type="ECO:0000305" key="14"/>
<evidence type="ECO:0000312" key="15">
    <source>
        <dbReference type="HGNC" id="HGNC:19861"/>
    </source>
</evidence>
<evidence type="ECO:0007829" key="16">
    <source>
        <dbReference type="PDB" id="6WME"/>
    </source>
</evidence>
<organism>
    <name type="scientific">Homo sapiens</name>
    <name type="common">Human</name>
    <dbReference type="NCBI Taxonomy" id="9606"/>
    <lineage>
        <taxon>Eukaryota</taxon>
        <taxon>Metazoa</taxon>
        <taxon>Chordata</taxon>
        <taxon>Craniata</taxon>
        <taxon>Vertebrata</taxon>
        <taxon>Euteleostomi</taxon>
        <taxon>Mammalia</taxon>
        <taxon>Eutheria</taxon>
        <taxon>Euarchontoglires</taxon>
        <taxon>Primates</taxon>
        <taxon>Haplorrhini</taxon>
        <taxon>Catarrhini</taxon>
        <taxon>Hominidae</taxon>
        <taxon>Homo</taxon>
    </lineage>
</organism>
<sequence length="975" mass="112216">MTQQPQDDFDRSVEDAQAWMKAVQDQLQVNDNTQGPRAALEARLWETEKICQLEPEGRVRVDLVLRMAEALLACCPGDQKPGILARLKDIKAQWEETVTYMTHCHSRIEWVWLHWSEYLLARDEFYRWFQKMMVTLEPHIELQLGLKEKQWQLSHAQVLLHNVDNQAVLLDRLLEEAASLFNRIGDPSVDEDAQKRMKAEYDAVKAKAQKRVDLLEQVAREHEEYQAGVDEFQLWLKAVVEKVNGCLGRNCKLPITQRLSTLQDIAKDFPRGEESLETLEEQSAGVIRNTSPLGAEKITGELEEMRKVLEKLRALWEEEEERLRGLLRSRGAWEQQIKQLEAELSEFRMVLQRLAQEGLQPAAKAGTEDELVAHWRRYSATRAALASEEPRVDRLQAQLKELIVFPHNLKPLSDSVIATIQEYQSLKVKSARLRNAAAVELWQHFQRPLQDLQLWKALAQRLLEVTASLPDLPSLHTFLPQIEAALMESSRLKELLTMLQLKKDLLIGIFGQERATALLEQVAGSMRDRDLLHNSLLQRKSKLQSLLAQHKDFGAAFEPLQRKLLDLQVRVQAEKGLQRDLPGKQAQLSRLQGLQEEGLDLGAQMEAARPLVQENPNHQHKMDQLSSDFQALQRSLEDLVDRCRQSVQEHCTFSHQLLELRQWIVVTTQKLEAHRGEAGPGDAESQEAEFERLVAEFPEKEAQLSLVEAQGWLVMEKSSPEGAAVVQEELRELAESWRALRLLEESLLSLIRNWHLQRMEVDSGKKMVFTNNIPKSGFLINPMDPIPRHRRRANLLQEEEGSHEDFSQLLRNFGQWLQVENSKLVRIIAMRTSTAEDLRTRKSKLQELEARVPEGQHLFENLLRLGPARGTSDELEDLRYQWMLYKSKLKDSGHLLTQSSPGEPTGFQKTRRWRGLGSLFRRACCVALPLQLLLLLFLLLLFLLPIREEDRSCTLANNFARSFTLMLRYNGPPPT</sequence>
<protein>
    <recommendedName>
        <fullName>Nesprin-3</fullName>
    </recommendedName>
    <alternativeName>
        <fullName>KASH domain-containing protein 3</fullName>
        <shortName>KASH3</shortName>
    </alternativeName>
    <alternativeName>
        <fullName>Nuclear envelope spectrin repeat protein 3</fullName>
    </alternativeName>
</protein>
<comment type="function">
    <text evidence="7 8 10">As a component of the LINC (LInker of Nucleoskeleton and Cytoskeleton) complex involved in the connection between the nuclear lamina and the cytoskeleton. The nucleocytoplasmic interactions established by the LINC complex play an important role in the transmission of mechanical forces across the nuclear envelope and in nuclear movement and positioning. Probable anchoring protein which tethers the nucleus to the cytoskeleton by binding PLEC which can associate with the intermediate filament system. Plays a role in the regulation of aortic epithelial cell morphology, and is required for flow-induced centrosome polarization and directional migration in aortic endothelial cells.</text>
</comment>
<comment type="subunit">
    <text evidence="8 9 11">Core component of LINC complexes which are composed of inner nuclear membrane SUN domain-containing proteins coupled to outer nuclear membrane KASH domain-containing nesprins. SUN and KASH domain-containing proteins seem to bind each other promiscuously; however, differentially expression of LINC complex constituents can give rise to specific assemblies. Interacts with SUN1 and SUN2; probably forming respective LINC complexes. Interacts with PLEC (via actin-binding domain). Interacts with DST. Interacts with SYNE1 via spectrin repeats. Interacts (via KASH domain) with TOR1A (ATP-bound); the interaction is required for SYNE3 nuclear envelope localization.</text>
</comment>
<comment type="interaction">
    <interactant intactId="EBI-10760872">
        <id>Q6ZMZ3</id>
    </interactant>
    <interactant intactId="EBI-1044964">
        <id>Q9UH99</id>
        <label>SUN2</label>
    </interactant>
    <organismsDiffer>false</organismsDiffer>
    <experiments>2</experiments>
</comment>
<comment type="interaction">
    <interactant intactId="EBI-10760907">
        <id>Q6ZMZ3-1</id>
    </interactant>
    <interactant intactId="EBI-10760805">
        <id>Q6ZWR6-5</id>
        <label>Syne1</label>
    </interactant>
    <organismsDiffer>true</organismsDiffer>
    <experiments>2</experiments>
</comment>
<comment type="subcellular location">
    <subcellularLocation>
        <location evidence="10">Nucleus outer membrane</location>
        <topology evidence="10">Single-pass type IV membrane protein</topology>
    </subcellularLocation>
    <subcellularLocation>
        <location evidence="10">Nucleus envelope</location>
    </subcellularLocation>
    <subcellularLocation>
        <location evidence="1">Rough endoplasmic reticulum</location>
    </subcellularLocation>
</comment>
<comment type="alternative products">
    <event type="alternative splicing"/>
    <isoform>
        <id>Q6ZMZ3-1</id>
        <name>1</name>
        <name>Alpha</name>
        <sequence type="displayed"/>
    </isoform>
    <isoform>
        <id>Q6ZMZ3-2</id>
        <name>2</name>
        <sequence type="described" ref="VSP_023978"/>
    </isoform>
    <isoform>
        <id>Q6ZMZ3-3</id>
        <name>3</name>
        <sequence type="described" ref="VSP_023976 VSP_023977"/>
    </isoform>
</comment>
<comment type="tissue specificity">
    <text evidence="10">Expressed in aortic endothelial cells (at protein level).</text>
</comment>
<comment type="domain">
    <text evidence="8">The KASH domain is involved in the binding to SUN1 and SUN2 through recognition of their SUN domains.</text>
</comment>
<comment type="PTM">
    <text evidence="2">The disulfid bond with SUN1 or SUN2 is required for stability of the respective LINC complex under tensile forces.</text>
</comment>
<comment type="similarity">
    <text evidence="14">Belongs to the nesprin family.</text>
</comment>
<comment type="sequence caution" evidence="14">
    <conflict type="erroneous initiation">
        <sequence resource="EMBL-CDS" id="BAC05312"/>
    </conflict>
    <text>Truncated N-terminus.</text>
</comment>
<comment type="sequence caution" evidence="14">
    <conflict type="erroneous initiation">
        <sequence resource="EMBL-CDS" id="BAD18582"/>
    </conflict>
    <text>Truncated N-terminus.</text>
</comment>
<comment type="sequence caution" evidence="14">
    <conflict type="erroneous initiation">
        <sequence resource="EMBL-CDS" id="CAD62365"/>
    </conflict>
    <text>Extended N-terminus.</text>
</comment>